<comment type="function">
    <text evidence="1">Specifically dimethylates two adjacent adenosines (A1518 and A1519) in the loop of a conserved hairpin near the 3'-end of 16S rRNA in the 30S particle. May play a critical role in biogenesis of 30S subunits.</text>
</comment>
<comment type="catalytic activity">
    <reaction evidence="1">
        <text>adenosine(1518)/adenosine(1519) in 16S rRNA + 4 S-adenosyl-L-methionine = N(6)-dimethyladenosine(1518)/N(6)-dimethyladenosine(1519) in 16S rRNA + 4 S-adenosyl-L-homocysteine + 4 H(+)</text>
        <dbReference type="Rhea" id="RHEA:19609"/>
        <dbReference type="Rhea" id="RHEA-COMP:10232"/>
        <dbReference type="Rhea" id="RHEA-COMP:10233"/>
        <dbReference type="ChEBI" id="CHEBI:15378"/>
        <dbReference type="ChEBI" id="CHEBI:57856"/>
        <dbReference type="ChEBI" id="CHEBI:59789"/>
        <dbReference type="ChEBI" id="CHEBI:74411"/>
        <dbReference type="ChEBI" id="CHEBI:74493"/>
        <dbReference type="EC" id="2.1.1.182"/>
    </reaction>
</comment>
<comment type="subcellular location">
    <subcellularLocation>
        <location evidence="1">Cytoplasm</location>
    </subcellularLocation>
</comment>
<comment type="similarity">
    <text evidence="1">Belongs to the class I-like SAM-binding methyltransferase superfamily. rRNA adenine N(6)-methyltransferase family. RsmA subfamily.</text>
</comment>
<protein>
    <recommendedName>
        <fullName evidence="1">Ribosomal RNA small subunit methyltransferase A</fullName>
        <ecNumber evidence="1">2.1.1.182</ecNumber>
    </recommendedName>
    <alternativeName>
        <fullName evidence="1">16S rRNA (adenine(1518)-N(6)/adenine(1519)-N(6))-dimethyltransferase</fullName>
    </alternativeName>
    <alternativeName>
        <fullName evidence="1">16S rRNA dimethyladenosine transferase</fullName>
    </alternativeName>
    <alternativeName>
        <fullName evidence="1">16S rRNA dimethylase</fullName>
    </alternativeName>
    <alternativeName>
        <fullName evidence="1">S-adenosylmethionine-6-N', N'-adenosyl(rRNA) dimethyltransferase</fullName>
    </alternativeName>
</protein>
<evidence type="ECO:0000255" key="1">
    <source>
        <dbReference type="HAMAP-Rule" id="MF_00607"/>
    </source>
</evidence>
<dbReference type="EC" id="2.1.1.182" evidence="1"/>
<dbReference type="EMBL" id="CP000259">
    <property type="protein sequence ID" value="ABF31411.1"/>
    <property type="molecule type" value="Genomic_DNA"/>
</dbReference>
<dbReference type="SMR" id="Q1JNI8"/>
<dbReference type="KEGG" id="spk:MGAS9429_Spy0223"/>
<dbReference type="HOGENOM" id="CLU_041220_0_0_9"/>
<dbReference type="Proteomes" id="UP000002433">
    <property type="component" value="Chromosome"/>
</dbReference>
<dbReference type="GO" id="GO:0005829">
    <property type="term" value="C:cytosol"/>
    <property type="evidence" value="ECO:0007669"/>
    <property type="project" value="TreeGrafter"/>
</dbReference>
<dbReference type="GO" id="GO:0052908">
    <property type="term" value="F:16S rRNA (adenine(1518)-N(6)/adenine(1519)-N(6))-dimethyltransferase activity"/>
    <property type="evidence" value="ECO:0007669"/>
    <property type="project" value="UniProtKB-EC"/>
</dbReference>
<dbReference type="GO" id="GO:0003723">
    <property type="term" value="F:RNA binding"/>
    <property type="evidence" value="ECO:0007669"/>
    <property type="project" value="UniProtKB-KW"/>
</dbReference>
<dbReference type="CDD" id="cd02440">
    <property type="entry name" value="AdoMet_MTases"/>
    <property type="match status" value="1"/>
</dbReference>
<dbReference type="FunFam" id="3.40.50.150:FF:000023">
    <property type="entry name" value="Ribosomal RNA small subunit methyltransferase A"/>
    <property type="match status" value="1"/>
</dbReference>
<dbReference type="Gene3D" id="1.10.8.100">
    <property type="entry name" value="Ribosomal RNA adenine dimethylase-like, domain 2"/>
    <property type="match status" value="1"/>
</dbReference>
<dbReference type="Gene3D" id="3.40.50.150">
    <property type="entry name" value="Vaccinia Virus protein VP39"/>
    <property type="match status" value="1"/>
</dbReference>
<dbReference type="HAMAP" id="MF_00607">
    <property type="entry name" value="16SrRNA_methyltr_A"/>
    <property type="match status" value="1"/>
</dbReference>
<dbReference type="InterPro" id="IPR001737">
    <property type="entry name" value="KsgA/Erm"/>
</dbReference>
<dbReference type="InterPro" id="IPR023165">
    <property type="entry name" value="rRNA_Ade_diMease-like_C"/>
</dbReference>
<dbReference type="InterPro" id="IPR020596">
    <property type="entry name" value="rRNA_Ade_Mease_Trfase_CS"/>
</dbReference>
<dbReference type="InterPro" id="IPR020598">
    <property type="entry name" value="rRNA_Ade_methylase_Trfase_N"/>
</dbReference>
<dbReference type="InterPro" id="IPR011530">
    <property type="entry name" value="rRNA_adenine_dimethylase"/>
</dbReference>
<dbReference type="InterPro" id="IPR029063">
    <property type="entry name" value="SAM-dependent_MTases_sf"/>
</dbReference>
<dbReference type="NCBIfam" id="TIGR00755">
    <property type="entry name" value="ksgA"/>
    <property type="match status" value="1"/>
</dbReference>
<dbReference type="PANTHER" id="PTHR11727">
    <property type="entry name" value="DIMETHYLADENOSINE TRANSFERASE"/>
    <property type="match status" value="1"/>
</dbReference>
<dbReference type="PANTHER" id="PTHR11727:SF7">
    <property type="entry name" value="DIMETHYLADENOSINE TRANSFERASE-RELATED"/>
    <property type="match status" value="1"/>
</dbReference>
<dbReference type="Pfam" id="PF00398">
    <property type="entry name" value="RrnaAD"/>
    <property type="match status" value="1"/>
</dbReference>
<dbReference type="SMART" id="SM00650">
    <property type="entry name" value="rADc"/>
    <property type="match status" value="1"/>
</dbReference>
<dbReference type="SUPFAM" id="SSF53335">
    <property type="entry name" value="S-adenosyl-L-methionine-dependent methyltransferases"/>
    <property type="match status" value="1"/>
</dbReference>
<dbReference type="PROSITE" id="PS01131">
    <property type="entry name" value="RRNA_A_DIMETH"/>
    <property type="match status" value="1"/>
</dbReference>
<dbReference type="PROSITE" id="PS51689">
    <property type="entry name" value="SAM_RNA_A_N6_MT"/>
    <property type="match status" value="1"/>
</dbReference>
<reference key="1">
    <citation type="journal article" date="2006" name="Proc. Natl. Acad. Sci. U.S.A.">
        <title>Molecular genetic anatomy of inter- and intraserotype variation in the human bacterial pathogen group A Streptococcus.</title>
        <authorList>
            <person name="Beres S.B."/>
            <person name="Richter E.W."/>
            <person name="Nagiec M.J."/>
            <person name="Sumby P."/>
            <person name="Porcella S.F."/>
            <person name="DeLeo F.R."/>
            <person name="Musser J.M."/>
        </authorList>
    </citation>
    <scope>NUCLEOTIDE SEQUENCE [LARGE SCALE GENOMIC DNA]</scope>
    <source>
        <strain>MGAS9429</strain>
    </source>
</reference>
<feature type="chain" id="PRO_0000257358" description="Ribosomal RNA small subunit methyltransferase A">
    <location>
        <begin position="1"/>
        <end position="298"/>
    </location>
</feature>
<feature type="binding site" evidence="1">
    <location>
        <position position="35"/>
    </location>
    <ligand>
        <name>S-adenosyl-L-methionine</name>
        <dbReference type="ChEBI" id="CHEBI:59789"/>
    </ligand>
</feature>
<feature type="binding site" evidence="1">
    <location>
        <position position="37"/>
    </location>
    <ligand>
        <name>S-adenosyl-L-methionine</name>
        <dbReference type="ChEBI" id="CHEBI:59789"/>
    </ligand>
</feature>
<feature type="binding site" evidence="1">
    <location>
        <position position="62"/>
    </location>
    <ligand>
        <name>S-adenosyl-L-methionine</name>
        <dbReference type="ChEBI" id="CHEBI:59789"/>
    </ligand>
</feature>
<feature type="binding site" evidence="1">
    <location>
        <position position="83"/>
    </location>
    <ligand>
        <name>S-adenosyl-L-methionine</name>
        <dbReference type="ChEBI" id="CHEBI:59789"/>
    </ligand>
</feature>
<feature type="binding site" evidence="1">
    <location>
        <position position="108"/>
    </location>
    <ligand>
        <name>S-adenosyl-L-methionine</name>
        <dbReference type="ChEBI" id="CHEBI:59789"/>
    </ligand>
</feature>
<feature type="binding site" evidence="1">
    <location>
        <position position="133"/>
    </location>
    <ligand>
        <name>S-adenosyl-L-methionine</name>
        <dbReference type="ChEBI" id="CHEBI:59789"/>
    </ligand>
</feature>
<gene>
    <name evidence="1" type="primary">rsmA</name>
    <name evidence="1" type="synonym">ksgA</name>
    <name type="ordered locus">MGAS9429_Spy0223</name>
</gene>
<keyword id="KW-0963">Cytoplasm</keyword>
<keyword id="KW-0489">Methyltransferase</keyword>
<keyword id="KW-0694">RNA-binding</keyword>
<keyword id="KW-0698">rRNA processing</keyword>
<keyword id="KW-0949">S-adenosyl-L-methionine</keyword>
<keyword id="KW-0808">Transferase</keyword>
<accession>Q1JNI8</accession>
<sequence>MIIKRREYMRIADYSVTKAVLDRHGFTFKKSFGQNFLTDTNILQKIVDTAEIDQNVNVIEIGPGIGALTEFLAENAAEVMAFEIDDRLVPILADTLRDFDNVQVVNQDILKADLQTQIKQFKNPDLPIKVVANLPYYITTPILMHLIESKIPFQEFVVMMQREVADRISAEPNTKAYGSLSIAVQYYMTAKVAFIVPRTVFVPAPNVDSAILKMVRRDQPLIEVKDEDFFFRVSRLSFVHRRKTLWNNLTSHFGKSEDIKAKLEKGLALADIKPSIRGEALSIQDFGKLADALKEVGL</sequence>
<proteinExistence type="inferred from homology"/>
<organism>
    <name type="scientific">Streptococcus pyogenes serotype M12 (strain MGAS9429)</name>
    <dbReference type="NCBI Taxonomy" id="370551"/>
    <lineage>
        <taxon>Bacteria</taxon>
        <taxon>Bacillati</taxon>
        <taxon>Bacillota</taxon>
        <taxon>Bacilli</taxon>
        <taxon>Lactobacillales</taxon>
        <taxon>Streptococcaceae</taxon>
        <taxon>Streptococcus</taxon>
    </lineage>
</organism>
<name>RSMA_STRPC</name>